<accession>A6ZWF1</accession>
<keyword id="KW-0143">Chaperone</keyword>
<keyword id="KW-0175">Coiled coil</keyword>
<keyword id="KW-0472">Membrane</keyword>
<keyword id="KW-0496">Mitochondrion</keyword>
<keyword id="KW-0999">Mitochondrion inner membrane</keyword>
<keyword id="KW-0809">Transit peptide</keyword>
<keyword id="KW-0812">Transmembrane</keyword>
<keyword id="KW-1133">Transmembrane helix</keyword>
<reference key="1">
    <citation type="journal article" date="2007" name="Proc. Natl. Acad. Sci. U.S.A.">
        <title>Genome sequencing and comparative analysis of Saccharomyces cerevisiae strain YJM789.</title>
        <authorList>
            <person name="Wei W."/>
            <person name="McCusker J.H."/>
            <person name="Hyman R.W."/>
            <person name="Jones T."/>
            <person name="Ning Y."/>
            <person name="Cao Z."/>
            <person name="Gu Z."/>
            <person name="Bruno D."/>
            <person name="Miranda M."/>
            <person name="Nguyen M."/>
            <person name="Wilhelmy J."/>
            <person name="Komp C."/>
            <person name="Tamse R."/>
            <person name="Wang X."/>
            <person name="Jia P."/>
            <person name="Luedi P."/>
            <person name="Oefner P.J."/>
            <person name="David L."/>
            <person name="Dietrich F.S."/>
            <person name="Li Y."/>
            <person name="Davis R.W."/>
            <person name="Steinmetz L.M."/>
        </authorList>
    </citation>
    <scope>NUCLEOTIDE SEQUENCE [LARGE SCALE GENOMIC DNA]</scope>
    <source>
        <strain>YJM789</strain>
    </source>
</reference>
<gene>
    <name evidence="1" type="primary">INA17</name>
    <name evidence="1" type="synonym">AIM43</name>
    <name evidence="1" type="synonym">FMP14</name>
    <name type="ORF">SCY_5628</name>
</gene>
<proteinExistence type="inferred from homology"/>
<dbReference type="EMBL" id="AAFW02000135">
    <property type="protein sequence ID" value="EDN61043.1"/>
    <property type="molecule type" value="Genomic_DNA"/>
</dbReference>
<dbReference type="SMR" id="A6ZWF1"/>
<dbReference type="HOGENOM" id="CLU_127263_0_0_1"/>
<dbReference type="OrthoDB" id="12522at4893"/>
<dbReference type="Proteomes" id="UP000007060">
    <property type="component" value="Unassembled WGS sequence"/>
</dbReference>
<dbReference type="GO" id="GO:0005743">
    <property type="term" value="C:mitochondrial inner membrane"/>
    <property type="evidence" value="ECO:0007669"/>
    <property type="project" value="UniProtKB-SubCell"/>
</dbReference>
<protein>
    <recommendedName>
        <fullName evidence="1">Inner membrane assembly complex subunit 17</fullName>
    </recommendedName>
    <alternativeName>
        <fullName evidence="1">Altered inheritance of mitochondria protein 43</fullName>
    </alternativeName>
    <alternativeName>
        <fullName evidence="1">Found in mitochondrial proteome protein 14</fullName>
    </alternativeName>
</protein>
<organism>
    <name type="scientific">Saccharomyces cerevisiae (strain YJM789)</name>
    <name type="common">Baker's yeast</name>
    <dbReference type="NCBI Taxonomy" id="307796"/>
    <lineage>
        <taxon>Eukaryota</taxon>
        <taxon>Fungi</taxon>
        <taxon>Dikarya</taxon>
        <taxon>Ascomycota</taxon>
        <taxon>Saccharomycotina</taxon>
        <taxon>Saccharomycetes</taxon>
        <taxon>Saccharomycetales</taxon>
        <taxon>Saccharomycetaceae</taxon>
        <taxon>Saccharomyces</taxon>
    </lineage>
</organism>
<name>INA17_YEAS7</name>
<comment type="function">
    <text evidence="1">Component of the INA complex (INAC) that promotes the biogenesis of mitochondrial F(1)F(0)-ATP synthase. INAC facilitates the assembly of the peripheral stalk and promotes the assembly of the catalytic F(1)-domain with the membrane-embedded F(0)-domain.</text>
</comment>
<comment type="subunit">
    <text evidence="1">Component of the inner membrane assembly (INA) complex, composed of INA17 and INA22. Interacts with a subset of F(1)F(0)-ATP synthase subunits of the F(1)-domain and the peripheral stalk.</text>
</comment>
<comment type="subcellular location">
    <subcellularLocation>
        <location evidence="1">Mitochondrion inner membrane</location>
        <topology evidence="2">Single-pass membrane protein</topology>
    </subcellularLocation>
</comment>
<comment type="similarity">
    <text evidence="3">Belongs to the INA17 family.</text>
</comment>
<sequence>MLKRRSNALITLSRTKLFPITTVAYYHRRLLNQQRRAVSTSPKKEIKSLEDLANLDSLDGVDTELIRDLINEHTTKLNIKKELDMLKKFSQEEESGHEIPVKRFIRPLWMFILMGSSVYLLLHFSWWKLEHEERESQLKKEVEILEHQLNELIIQDKTHNTSRGKGSNESTHMKPWYRRWFW</sequence>
<evidence type="ECO:0000250" key="1">
    <source>
        <dbReference type="UniProtKB" id="Q02888"/>
    </source>
</evidence>
<evidence type="ECO:0000255" key="2"/>
<evidence type="ECO:0000305" key="3"/>
<feature type="transit peptide" description="Mitochondrion" evidence="2">
    <location>
        <begin position="1"/>
        <end position="45"/>
    </location>
</feature>
<feature type="chain" id="PRO_0000399885" description="Inner membrane assembly complex subunit 17" evidence="2">
    <location>
        <begin position="46"/>
        <end position="182"/>
    </location>
</feature>
<feature type="topological domain" description="Mitochondrial matrix" evidence="1">
    <location>
        <begin position="46"/>
        <end position="107"/>
    </location>
</feature>
<feature type="transmembrane region" description="Helical" evidence="2">
    <location>
        <begin position="108"/>
        <end position="127"/>
    </location>
</feature>
<feature type="topological domain" description="Mitochondrial intermembrane" evidence="1">
    <location>
        <begin position="128"/>
        <end position="182"/>
    </location>
</feature>
<feature type="coiled-coil region" evidence="2">
    <location>
        <begin position="128"/>
        <end position="158"/>
    </location>
</feature>